<comment type="function">
    <text evidence="8 10">Proteoglycan playing a role in cell proliferation and migration which stimulates endothelial cells motility during microvascular morphogenesis. May also inhibit neurite outgrowth and growth cone collapse during axon regeneration. Cell surface receptor for collagen alpha 2(VI) which may confer cells ability to migrate on that substrate. Binds through its extracellular N-terminus growth factors, extracellular matrix proteases modulating their activity. May regulate MPP16-dependent degradation and invasion of type I collagen participating in melanoma cells invasion properties. May modulate the plasminogen system by enhancing plasminogen activation and inhibiting angiostatin. Also functions as a signal transducing protein by binding through its cytoplasmic C-terminus scaffolding and signaling proteins. May promote retraction fiber formation and cell polarization through Rho GTPase activation. May stimulate alpha-4, beta-1 integrin-mediated adhesion and spreading by recruiting and activating a signaling cascade through CDC42, ACK1 and BCAR1. May activate FAK and ERK1/ERK2 signaling cascades.</text>
</comment>
<comment type="subunit">
    <text evidence="1 9">Interacts with ITGA4 through its chondroitin sulfate glycosaminoglycan. Interacts with BCAR1, CDC42 and ACK1. Interacts with MMP16. Interacts with the first PDZ domain of MPDZ. Interacts with PRKCA. Interacts with LGALS3 and the integrin composed of ITGB1 and ITGA3. Binds TNC, laminin-1, COL5A1 and COL6A2. Interacts with PLG and angiostatin. Binds FGF2 and PDGFA (By similarity). Interacts with GRIP1, GRIP2 and GRIA2. Forms a ternary complex with GRIP1 and GRIA2.</text>
</comment>
<comment type="interaction">
    <interactant intactId="EBI-8327479">
        <id>Q8VHY0</id>
    </interactant>
    <interactant intactId="EBI-77538">
        <id>P23819</id>
        <label>Gria2</label>
    </interactant>
    <organismsDiffer>false</organismsDiffer>
    <experiments>2</experiments>
</comment>
<comment type="interaction">
    <interactant intactId="EBI-8327479">
        <id>Q8VHY0</id>
    </interactant>
    <interactant intactId="EBI-537752">
        <id>Q925T6</id>
        <label>Grip1</label>
    </interactant>
    <organismsDiffer>false</organismsDiffer>
    <experiments>7</experiments>
</comment>
<comment type="interaction">
    <interactant intactId="EBI-8327479">
        <id>Q8VHY0</id>
    </interactant>
    <interactant intactId="EBI-936045">
        <id>Q9WTW1</id>
        <label>Grip2</label>
    </interactant>
    <organismsDiffer>true</organismsDiffer>
    <experiments>2</experiments>
</comment>
<comment type="subcellular location">
    <subcellularLocation>
        <location evidence="9">Cell membrane</location>
        <topology evidence="2">Single-pass type I membrane protein</topology>
        <orientation evidence="2">Extracellular side</orientation>
    </subcellularLocation>
    <subcellularLocation>
        <location evidence="2">Apical cell membrane</location>
        <topology evidence="2">Single-pass type I membrane protein</topology>
        <orientation evidence="2">Extracellular side</orientation>
    </subcellularLocation>
    <subcellularLocation>
        <location evidence="2">Cell projection</location>
        <location evidence="2">Lamellipodium membrane</location>
        <topology evidence="2">Single-pass type I membrane protein</topology>
        <orientation evidence="2">Extracellular side</orientation>
    </subcellularLocation>
    <subcellularLocation>
        <location evidence="2">Cell surface</location>
    </subcellularLocation>
    <text evidence="2 9">Localized at the apical plasma membrane it relocalizes to the lamellipodia of astrocytoma upon phosphorylation by PRKCA. Localizes to the retraction fibers. A fraction may undergo cell surface proteolysis and secretion (By similarity). Localizes to the plasma membrane of oligodendrocytes (PubMed:12458226).</text>
</comment>
<comment type="alternative products">
    <event type="alternative splicing"/>
    <isoform>
        <id>Q8VHY0-1</id>
        <name>1</name>
        <sequence type="displayed"/>
    </isoform>
    <isoform>
        <id>Q8VHY0-2</id>
        <name>2</name>
        <sequence type="described" ref="VSP_015656"/>
    </isoform>
    <isoform>
        <id>Q8VHY0-3</id>
        <name>3</name>
        <sequence type="described" ref="VSP_015657 VSP_015658"/>
    </isoform>
</comment>
<comment type="tissue specificity">
    <text evidence="10">Expressed in microcascular pericytes and not endothelial cells.</text>
</comment>
<comment type="PTM">
    <text evidence="1">O-glycosylated; contains glycosaminoglycan chondroitin sulfate which are required for proper localization and function in stress fiber formation. Involved in interaction with MMP16 and ITGA4 (By similarity).</text>
</comment>
<comment type="PTM">
    <text evidence="1">Phosphorylation by PRKCA regulates its subcellular location and function in cell motility.</text>
</comment>
<comment type="disruption phenotype">
    <text evidence="8">Mice are unresponsive to PDGF-AA through PDGF-alpha receptor.</text>
</comment>
<comment type="miscellaneous">
    <text>Valuable marker for several incompletely differentiated precursor cells.</text>
</comment>
<comment type="sequence caution" evidence="14">
    <conflict type="frameshift">
        <sequence resource="EMBL-CDS" id="BAC26150"/>
    </conflict>
</comment>
<sequence>MLLGPGHPLSAPALALALTLALLVRSTAPASFFGENHLEVPVPSALTRVDLLLQFSTSQPEALLLLAAGQDDHLLLQLHSGCLQVRLALGQKELKLQTPADTVLSDSAPHTVVLTVSDSWAVLSVDGVLNTSAPIPRASHLKATYGLFVGSSGSLDLPYLKGISRPLRGCLHSAILNGRNLLRPLTSDVHEGCAEEFSAGDEVGLGFSGPHSLAAFPAWSTREEGTLEFTLTTRSQQAPLAFQAGDKRGNFIYVDIFEGHLRAVVEKGQGTMLLRNSVPVADGQPHEVSVHIDVHRLEISVDQYPTRTFNRGVLSYLEPRGSLLLGGLDTEASRHLQEHRLGLAPGAANISLVGCIEDFSVNGRRQGLRDAWLTRDMSAGCRPEEDEYEEEVYGPYETFSTLAPEAWPAMELPEPCIPEPGLPAVFANFTQLLTISPLVVAEGGTAWLEWRHVQPTLDLTEAELRKSQVLFSVSQSARHGDLELDILGAQTRKMFTLLDVVNRKARFVHDGSEDTSDQLMLEVSVTARAPVPSCLRRGQIYILPIQVNPVNDPPRIIFPHGSLMVILEHTQKPLGPEIFQAYDPDSACEGLTFQLLGVSSGVPVEHRDQPGEPATEFSCRELEVGDIVYVHRGGPAQDLTFRVSDGMQASAPATLKVVAVRPAIQILHNTGLHLAQGSAAAILPANLSVETNAVGQDVSVLFRVTGTLQFGELQKQGAGGVEGTEWWDTLAFHQRDVEQGRVRYLSTDPQHHTQDTVEDLILEVQVGQETLSNLSFPVTIQRATVWMLRLEPLHTQNPHQETLTPAHLEASLEEEEEEGSPQPHTFHYELVQAPRRGNLLLQGTRLSDGESFSQSDLQAGRVTYRATMRTSEAADDSFRFRVTSPPHFSPLYTFPIHIGGDPNAPVLTNVLLMVPEGGEGVLSADHLFVKSLNSASYLYEVMEQPHHGKLAWRDPKGKSTPVTSFTNEDLLHGRLVYQHDDSETIEDDIPFVATRQGEGSGDMAWEEVRGVFRVAIQPVNDHAPVQTISRVFHVARGGQRLLTTDDVAFSDADSGFSDAQLVLTRKDLLFGSIVAMEEPTRPIYRFTQEDLRKKQVLFVHSGADHGWLQLQVSDGQHQATAMLEVQASEPYLHVANSSSLVVPQGGQGTIDTAVLQLDTNLDIRSGNEVHYHVTAGPQWGQLLRDGQSVTSFSQRDLLDGAILYSHNGSLSPQDTLAFSVAAGPVHTNTFLQVTIALEGPLAPLQLVQHKKIYVFQGEAAEIRRDQLEVVQEAVLPADIMFSLRSPPNAGYLVMVSHGASAEEPPSLDPVQSFSQEAVNSGRVLYLHSRPGAWSDSFSLDVASGLGDPLEGISVELEVLPTVIPLDVQNFSVPEGGTRTLAPPLVQITGPYFPTLPGLVLQVLEPPQHGALQKEDHSQDGSLSTFSWREVEEQLIRYVHDGSETQTDAFVLLANASEMDRQSQPVAFTITILPVNDQPPVLTTNTGLQIWEGAIVPIPPEALRGTDNDSGPEDLVYTIEQPSNGRIALRVAPDTEVHRFTQAQLDSGLVLFSHRGALEGGFHFDLSDGAHTSPGHFFRVVAQKQALLSLEGTRKLTVCPESVQPLSSQSLSASSSTGADPRHLLYRVVRGPQLGRLLHAQQGSAEEVLVNFTQAEVNAGNILYEHEMSSEPFWEAHDTIGLLLSSPPARDLAATLAVMVSFDAACPQRPSRLWKNKGLWVPEGQRAKITVAALDAANLLASVPASQRSRHDVLFQVTQFPTRGQLLVSEEPLHARRPYFLQSELAAGQLVYAHGGGGTQQDGFRFRAHLQGPTGTSVAGPQTSEAFVITVRDVNERPPQPQASIPLRVTRGSRAPVSRAQLSVVDPDSAPGEIEYEVQRAPHNGFLSLAGDNTGPVTHFTQADVDAGRLAFVANGSSVAGVFQLSMSDGASPPIPMSLAVDVLPSTIEVQLRAPLEVPQALGRTSLSRQQLQVISDREEPDVAYRLTQGPLYGQLLVGGQPASAFSQLQVDQGDVVFVFTNFSSSQDHFKVVALARGVNASATVNVTVQALLHVWAGGPWPQGTTLRLDPTVLDASELANRTGSMPHFRLLAGPRYGRVVRVSQGRTESRSNQLVEHFTQRDLEEGQLGLEVGKPEGRSTGPAGDRLTLELWAKGVPPAVALLDFATEPYHAAKSYSVALLSVPEAVRTETEKPGRSVPTGQPGQAASSPVPTAAKGGFLGFLEANMFSIIIPVCLILLLLALILPLLFYLRKRNKTGKHDVQVLTAKPRNGLAGDTETFRKVEPGQAIPLITVPGQGPPPGGQPDPELLQFCRTPNPALRNGQYWV</sequence>
<gene>
    <name type="primary">Cspg4</name>
    <name type="synonym">An2</name>
    <name type="synonym">Kiaa4232</name>
    <name type="synonym">Ng2</name>
</gene>
<accession>Q8VHY0</accession>
<accession>G5E892</accession>
<accession>Q5DTG1</accession>
<accession>Q8BPI8</accession>
<accession>Q8CE79</accession>
<name>CSPG4_MOUSE</name>
<dbReference type="EMBL" id="AF352400">
    <property type="protein sequence ID" value="AAL37505.1"/>
    <property type="molecule type" value="mRNA"/>
</dbReference>
<dbReference type="EMBL" id="AK028844">
    <property type="protein sequence ID" value="BAC26150.1"/>
    <property type="status" value="ALT_SEQ"/>
    <property type="molecule type" value="mRNA"/>
</dbReference>
<dbReference type="EMBL" id="AK075625">
    <property type="protein sequence ID" value="BAC35866.1"/>
    <property type="molecule type" value="mRNA"/>
</dbReference>
<dbReference type="EMBL" id="AC126257">
    <property type="status" value="NOT_ANNOTATED_CDS"/>
    <property type="molecule type" value="Genomic_DNA"/>
</dbReference>
<dbReference type="EMBL" id="CH466522">
    <property type="protein sequence ID" value="EDL25876.1"/>
    <property type="molecule type" value="Genomic_DNA"/>
</dbReference>
<dbReference type="EMBL" id="AK220559">
    <property type="protein sequence ID" value="BAD90326.1"/>
    <property type="molecule type" value="mRNA"/>
</dbReference>
<dbReference type="CCDS" id="CCDS23211.1">
    <molecule id="Q8VHY0-1"/>
</dbReference>
<dbReference type="RefSeq" id="NP_620570.2">
    <molecule id="Q8VHY0-1"/>
    <property type="nucleotide sequence ID" value="NM_139001.2"/>
</dbReference>
<dbReference type="SMR" id="Q8VHY0"/>
<dbReference type="BioGRID" id="228250">
    <property type="interactions" value="7"/>
</dbReference>
<dbReference type="CORUM" id="Q8VHY0"/>
<dbReference type="FunCoup" id="Q8VHY0">
    <property type="interactions" value="108"/>
</dbReference>
<dbReference type="IntAct" id="Q8VHY0">
    <property type="interactions" value="4"/>
</dbReference>
<dbReference type="MINT" id="Q8VHY0"/>
<dbReference type="STRING" id="10090.ENSMUSP00000038909"/>
<dbReference type="GlyConnect" id="2213">
    <property type="glycosylation" value="1 N-Linked glycan (1 site)"/>
</dbReference>
<dbReference type="GlyCosmos" id="Q8VHY0">
    <property type="glycosylation" value="16 sites, 1 glycan"/>
</dbReference>
<dbReference type="GlyGen" id="Q8VHY0">
    <property type="glycosylation" value="18 sites, 4 N-linked glycans (3 sites), 1 O-linked glycan (1 site)"/>
</dbReference>
<dbReference type="iPTMnet" id="Q8VHY0"/>
<dbReference type="PhosphoSitePlus" id="Q8VHY0"/>
<dbReference type="jPOST" id="Q8VHY0"/>
<dbReference type="PaxDb" id="10090-ENSMUSP00000038909"/>
<dbReference type="PeptideAtlas" id="Q8VHY0"/>
<dbReference type="ProteomicsDB" id="284040">
    <molecule id="Q8VHY0-1"/>
</dbReference>
<dbReference type="ProteomicsDB" id="284041">
    <molecule id="Q8VHY0-2"/>
</dbReference>
<dbReference type="ProteomicsDB" id="284042">
    <molecule id="Q8VHY0-3"/>
</dbReference>
<dbReference type="Pumba" id="Q8VHY0"/>
<dbReference type="Antibodypedia" id="1108">
    <property type="antibodies" value="776 antibodies from 41 providers"/>
</dbReference>
<dbReference type="DNASU" id="121021"/>
<dbReference type="Ensembl" id="ENSMUST00000035661.7">
    <molecule id="Q8VHY0-1"/>
    <property type="protein sequence ID" value="ENSMUSP00000038909.6"/>
    <property type="gene ID" value="ENSMUSG00000032911.7"/>
</dbReference>
<dbReference type="GeneID" id="121021"/>
<dbReference type="KEGG" id="mmu:121021"/>
<dbReference type="UCSC" id="uc009ptl.1">
    <molecule id="Q8VHY0-1"/>
    <property type="organism name" value="mouse"/>
</dbReference>
<dbReference type="UCSC" id="uc009ptn.1">
    <molecule id="Q8VHY0-3"/>
    <property type="organism name" value="mouse"/>
</dbReference>
<dbReference type="UCSC" id="uc009pto.1">
    <molecule id="Q8VHY0-2"/>
    <property type="organism name" value="mouse"/>
</dbReference>
<dbReference type="AGR" id="MGI:2153093"/>
<dbReference type="CTD" id="1464"/>
<dbReference type="MGI" id="MGI:2153093">
    <property type="gene designation" value="Cspg4"/>
</dbReference>
<dbReference type="VEuPathDB" id="HostDB:ENSMUSG00000032911"/>
<dbReference type="eggNOG" id="KOG3597">
    <property type="taxonomic scope" value="Eukaryota"/>
</dbReference>
<dbReference type="GeneTree" id="ENSGT00940000154091"/>
<dbReference type="HOGENOM" id="CLU_000473_1_0_1"/>
<dbReference type="InParanoid" id="Q8VHY0"/>
<dbReference type="OMA" id="PWPQGTT"/>
<dbReference type="OrthoDB" id="9026019at2759"/>
<dbReference type="PhylomeDB" id="Q8VHY0"/>
<dbReference type="TreeFam" id="TF316876"/>
<dbReference type="Reactome" id="R-MMU-1971475">
    <property type="pathway name" value="A tetrasaccharide linker sequence is required for GAG synthesis"/>
</dbReference>
<dbReference type="Reactome" id="R-MMU-2022870">
    <property type="pathway name" value="Chondroitin sulfate biosynthesis"/>
</dbReference>
<dbReference type="Reactome" id="R-MMU-2022923">
    <property type="pathway name" value="Dermatan sulfate biosynthesis"/>
</dbReference>
<dbReference type="Reactome" id="R-MMU-2024101">
    <property type="pathway name" value="CS/DS degradation"/>
</dbReference>
<dbReference type="BioGRID-ORCS" id="121021">
    <property type="hits" value="3 hits in 80 CRISPR screens"/>
</dbReference>
<dbReference type="ChiTaRS" id="Cspg4">
    <property type="organism name" value="mouse"/>
</dbReference>
<dbReference type="PRO" id="PR:Q8VHY0"/>
<dbReference type="Proteomes" id="UP000000589">
    <property type="component" value="Chromosome 9"/>
</dbReference>
<dbReference type="RNAct" id="Q8VHY0">
    <property type="molecule type" value="protein"/>
</dbReference>
<dbReference type="Bgee" id="ENSMUSG00000032911">
    <property type="expression patterns" value="Expressed in humerus cartilage element and 212 other cell types or tissues"/>
</dbReference>
<dbReference type="GO" id="GO:0016324">
    <property type="term" value="C:apical plasma membrane"/>
    <property type="evidence" value="ECO:0007669"/>
    <property type="project" value="UniProtKB-SubCell"/>
</dbReference>
<dbReference type="GO" id="GO:0042995">
    <property type="term" value="C:cell projection"/>
    <property type="evidence" value="ECO:0000314"/>
    <property type="project" value="MGI"/>
</dbReference>
<dbReference type="GO" id="GO:0009986">
    <property type="term" value="C:cell surface"/>
    <property type="evidence" value="ECO:0007669"/>
    <property type="project" value="UniProtKB-SubCell"/>
</dbReference>
<dbReference type="GO" id="GO:0062023">
    <property type="term" value="C:collagen-containing extracellular matrix"/>
    <property type="evidence" value="ECO:0007005"/>
    <property type="project" value="BHF-UCL"/>
</dbReference>
<dbReference type="GO" id="GO:0031258">
    <property type="term" value="C:lamellipodium membrane"/>
    <property type="evidence" value="ECO:0007669"/>
    <property type="project" value="UniProtKB-SubCell"/>
</dbReference>
<dbReference type="GO" id="GO:0005654">
    <property type="term" value="C:nucleoplasm"/>
    <property type="evidence" value="ECO:0007669"/>
    <property type="project" value="Ensembl"/>
</dbReference>
<dbReference type="GO" id="GO:0005886">
    <property type="term" value="C:plasma membrane"/>
    <property type="evidence" value="ECO:0000314"/>
    <property type="project" value="MGI"/>
</dbReference>
<dbReference type="GO" id="GO:0001726">
    <property type="term" value="C:ruffle"/>
    <property type="evidence" value="ECO:0000314"/>
    <property type="project" value="MGI"/>
</dbReference>
<dbReference type="GO" id="GO:0015026">
    <property type="term" value="F:coreceptor activity"/>
    <property type="evidence" value="ECO:0000314"/>
    <property type="project" value="MGI"/>
</dbReference>
<dbReference type="GO" id="GO:0019901">
    <property type="term" value="F:protein kinase binding"/>
    <property type="evidence" value="ECO:0007669"/>
    <property type="project" value="Ensembl"/>
</dbReference>
<dbReference type="GO" id="GO:0001525">
    <property type="term" value="P:angiogenesis"/>
    <property type="evidence" value="ECO:0007669"/>
    <property type="project" value="UniProtKB-KW"/>
</dbReference>
<dbReference type="GO" id="GO:0008347">
    <property type="term" value="P:glial cell migration"/>
    <property type="evidence" value="ECO:0000314"/>
    <property type="project" value="MGI"/>
</dbReference>
<dbReference type="GO" id="GO:0035556">
    <property type="term" value="P:intracellular signal transduction"/>
    <property type="evidence" value="ECO:0007669"/>
    <property type="project" value="Ensembl"/>
</dbReference>
<dbReference type="GO" id="GO:0048008">
    <property type="term" value="P:platelet-derived growth factor receptor signaling pathway"/>
    <property type="evidence" value="ECO:0000314"/>
    <property type="project" value="MGI"/>
</dbReference>
<dbReference type="GO" id="GO:0043410">
    <property type="term" value="P:positive regulation of MAPK cascade"/>
    <property type="evidence" value="ECO:0000315"/>
    <property type="project" value="MGI"/>
</dbReference>
<dbReference type="GO" id="GO:0097178">
    <property type="term" value="P:ruffle assembly"/>
    <property type="evidence" value="ECO:0000314"/>
    <property type="project" value="MGI"/>
</dbReference>
<dbReference type="GO" id="GO:0006929">
    <property type="term" value="P:substrate-dependent cell migration"/>
    <property type="evidence" value="ECO:0000316"/>
    <property type="project" value="MGI"/>
</dbReference>
<dbReference type="GO" id="GO:0048771">
    <property type="term" value="P:tissue remodeling"/>
    <property type="evidence" value="ECO:0007669"/>
    <property type="project" value="UniProtKB-KW"/>
</dbReference>
<dbReference type="CDD" id="cd00110">
    <property type="entry name" value="LamG"/>
    <property type="match status" value="2"/>
</dbReference>
<dbReference type="FunFam" id="2.60.120.200:FF:000158">
    <property type="entry name" value="Chondroitin sulfate proteoglycan 4"/>
    <property type="match status" value="1"/>
</dbReference>
<dbReference type="FunFam" id="2.60.120.200:FF:000248">
    <property type="entry name" value="Chondroitin sulfate proteoglycan 4"/>
    <property type="match status" value="1"/>
</dbReference>
<dbReference type="Gene3D" id="2.60.120.200">
    <property type="match status" value="2"/>
</dbReference>
<dbReference type="InterPro" id="IPR013320">
    <property type="entry name" value="ConA-like_dom_sf"/>
</dbReference>
<dbReference type="InterPro" id="IPR039005">
    <property type="entry name" value="CSPG_rpt"/>
</dbReference>
<dbReference type="InterPro" id="IPR051561">
    <property type="entry name" value="FRAS1_ECM"/>
</dbReference>
<dbReference type="InterPro" id="IPR001791">
    <property type="entry name" value="Laminin_G"/>
</dbReference>
<dbReference type="PANTHER" id="PTHR45739:SF13">
    <property type="entry name" value="CHONDROITIN SULFATE PROTEOGLYCAN 4"/>
    <property type="match status" value="1"/>
</dbReference>
<dbReference type="PANTHER" id="PTHR45739">
    <property type="entry name" value="MATRIX PROTEIN, PUTATIVE-RELATED"/>
    <property type="match status" value="1"/>
</dbReference>
<dbReference type="Pfam" id="PF16184">
    <property type="entry name" value="Cadherin_3"/>
    <property type="match status" value="13"/>
</dbReference>
<dbReference type="Pfam" id="PF00054">
    <property type="entry name" value="Laminin_G_1"/>
    <property type="match status" value="1"/>
</dbReference>
<dbReference type="Pfam" id="PF02210">
    <property type="entry name" value="Laminin_G_2"/>
    <property type="match status" value="1"/>
</dbReference>
<dbReference type="SMART" id="SM00282">
    <property type="entry name" value="LamG"/>
    <property type="match status" value="2"/>
</dbReference>
<dbReference type="SUPFAM" id="SSF49899">
    <property type="entry name" value="Concanavalin A-like lectins/glucanases"/>
    <property type="match status" value="2"/>
</dbReference>
<dbReference type="PROSITE" id="PS51854">
    <property type="entry name" value="CSPG"/>
    <property type="match status" value="15"/>
</dbReference>
<dbReference type="PROSITE" id="PS50025">
    <property type="entry name" value="LAM_G_DOMAIN"/>
    <property type="match status" value="2"/>
</dbReference>
<organism>
    <name type="scientific">Mus musculus</name>
    <name type="common">Mouse</name>
    <dbReference type="NCBI Taxonomy" id="10090"/>
    <lineage>
        <taxon>Eukaryota</taxon>
        <taxon>Metazoa</taxon>
        <taxon>Chordata</taxon>
        <taxon>Craniata</taxon>
        <taxon>Vertebrata</taxon>
        <taxon>Euteleostomi</taxon>
        <taxon>Mammalia</taxon>
        <taxon>Eutheria</taxon>
        <taxon>Euarchontoglires</taxon>
        <taxon>Glires</taxon>
        <taxon>Rodentia</taxon>
        <taxon>Myomorpha</taxon>
        <taxon>Muroidea</taxon>
        <taxon>Muridae</taxon>
        <taxon>Murinae</taxon>
        <taxon>Mus</taxon>
        <taxon>Mus</taxon>
    </lineage>
</organism>
<evidence type="ECO:0000250" key="1"/>
<evidence type="ECO:0000250" key="2">
    <source>
        <dbReference type="UniProtKB" id="Q00657"/>
    </source>
</evidence>
<evidence type="ECO:0000250" key="3">
    <source>
        <dbReference type="UniProtKB" id="Q6UVK1"/>
    </source>
</evidence>
<evidence type="ECO:0000255" key="4"/>
<evidence type="ECO:0000255" key="5">
    <source>
        <dbReference type="PROSITE-ProRule" id="PRU00122"/>
    </source>
</evidence>
<evidence type="ECO:0000255" key="6">
    <source>
        <dbReference type="PROSITE-ProRule" id="PRU01201"/>
    </source>
</evidence>
<evidence type="ECO:0000256" key="7">
    <source>
        <dbReference type="SAM" id="MobiDB-lite"/>
    </source>
</evidence>
<evidence type="ECO:0000269" key="8">
    <source>
    </source>
</evidence>
<evidence type="ECO:0000269" key="9">
    <source>
    </source>
</evidence>
<evidence type="ECO:0000269" key="10">
    <source>
    </source>
</evidence>
<evidence type="ECO:0000269" key="11">
    <source>
    </source>
</evidence>
<evidence type="ECO:0000303" key="12">
    <source>
    </source>
</evidence>
<evidence type="ECO:0000303" key="13">
    <source ref="5"/>
</evidence>
<evidence type="ECO:0000305" key="14"/>
<protein>
    <recommendedName>
        <fullName>Chondroitin sulfate proteoglycan 4</fullName>
    </recommendedName>
    <alternativeName>
        <fullName>Chondroitin sulfate proteoglycan NG2</fullName>
    </alternativeName>
    <alternativeName>
        <fullName>Proteoglycan AN2</fullName>
    </alternativeName>
</protein>
<feature type="signal peptide" evidence="4">
    <location>
        <begin position="1"/>
        <end position="29"/>
    </location>
</feature>
<feature type="chain" id="PRO_0000041963" description="Chondroitin sulfate proteoglycan 4">
    <location>
        <begin position="30"/>
        <end position="2327"/>
    </location>
</feature>
<feature type="topological domain" description="Extracellular" evidence="2">
    <location>
        <begin position="30"/>
        <end position="2229"/>
    </location>
</feature>
<feature type="transmembrane region" description="Helical" evidence="4">
    <location>
        <begin position="2230"/>
        <end position="2250"/>
    </location>
</feature>
<feature type="topological domain" description="Cytoplasmic" evidence="2">
    <location>
        <begin position="2251"/>
        <end position="2327"/>
    </location>
</feature>
<feature type="domain" description="Laminin G-like 1" evidence="5">
    <location>
        <begin position="30"/>
        <end position="193"/>
    </location>
</feature>
<feature type="domain" description="Laminin G-like 2" evidence="5">
    <location>
        <begin position="203"/>
        <end position="381"/>
    </location>
</feature>
<feature type="repeat" description="CSPG 1" evidence="6">
    <location>
        <begin position="429"/>
        <end position="524"/>
    </location>
</feature>
<feature type="repeat" description="CSPG 2" evidence="6">
    <location>
        <begin position="554"/>
        <end position="646"/>
    </location>
</feature>
<feature type="repeat" description="CSPG 3" evidence="6">
    <location>
        <begin position="663"/>
        <end position="765"/>
    </location>
</feature>
<feature type="repeat" description="CSPG 4" evidence="6">
    <location>
        <begin position="784"/>
        <end position="883"/>
    </location>
</feature>
<feature type="repeat" description="CSPG 5" evidence="6">
    <location>
        <begin position="903"/>
        <end position="994"/>
    </location>
</feature>
<feature type="repeat" description="CSPG 6" evidence="6">
    <location>
        <begin position="1023"/>
        <end position="1115"/>
    </location>
</feature>
<feature type="repeat" description="CSPG 7" evidence="6">
    <location>
        <begin position="1131"/>
        <end position="1221"/>
    </location>
</feature>
<feature type="repeat" description="CSPG 8" evidence="6">
    <location>
        <begin position="1243"/>
        <end position="1342"/>
    </location>
</feature>
<feature type="repeat" description="CSPG 9" evidence="6">
    <location>
        <begin position="1361"/>
        <end position="1454"/>
    </location>
</feature>
<feature type="repeat" description="CSPG 10" evidence="6">
    <location>
        <begin position="1478"/>
        <end position="1568"/>
    </location>
</feature>
<feature type="repeat" description="CSPG 11" evidence="6">
    <location>
        <begin position="1586"/>
        <end position="1684"/>
    </location>
</feature>
<feature type="repeat" description="CSPG 12" evidence="6">
    <location>
        <begin position="1709"/>
        <end position="1808"/>
    </location>
</feature>
<feature type="repeat" description="CSPG 13" evidence="6">
    <location>
        <begin position="1837"/>
        <end position="1929"/>
    </location>
</feature>
<feature type="repeat" description="CSPG 14" evidence="6">
    <location>
        <begin position="1946"/>
        <end position="2034"/>
    </location>
</feature>
<feature type="repeat" description="CSPG 15" evidence="6">
    <location>
        <begin position="2043"/>
        <end position="2152"/>
    </location>
</feature>
<feature type="region of interest" description="Globular or compact configuration stabilized by disulfide bonds">
    <location>
        <begin position="30"/>
        <end position="640"/>
    </location>
</feature>
<feature type="region of interest" description="Neurite growth inhibition" evidence="1">
    <location>
        <begin position="30"/>
        <end position="640"/>
    </location>
</feature>
<feature type="region of interest" description="Interaction with COL6A2" evidence="1">
    <location>
        <begin position="575"/>
        <end position="1045"/>
    </location>
</feature>
<feature type="region of interest" description="Interaction with COL5A1" evidence="1">
    <location>
        <begin position="632"/>
        <end position="1451"/>
    </location>
</feature>
<feature type="region of interest" description="Neurite growth inhibition" evidence="1">
    <location>
        <begin position="1591"/>
        <end position="2226"/>
    </location>
</feature>
<feature type="region of interest" description="Cysteine-containing">
    <location>
        <begin position="1592"/>
        <end position="2226"/>
    </location>
</feature>
<feature type="region of interest" description="Disordered" evidence="7">
    <location>
        <begin position="2190"/>
        <end position="2210"/>
    </location>
</feature>
<feature type="short sequence motif" description="PDZ-binding">
    <location>
        <begin position="2325"/>
        <end position="2327"/>
    </location>
</feature>
<feature type="compositionally biased region" description="Polar residues" evidence="7">
    <location>
        <begin position="2199"/>
        <end position="2210"/>
    </location>
</feature>
<feature type="modified residue" description="Phosphothreonine; by PKC/PRKCA" evidence="2">
    <location>
        <position position="2257"/>
    </location>
</feature>
<feature type="glycosylation site" description="N-linked (GlcNAc...) asparagine" evidence="11">
    <location>
        <position position="130"/>
    </location>
</feature>
<feature type="glycosylation site" description="N-linked (GlcNAc...) asparagine" evidence="4">
    <location>
        <position position="349"/>
    </location>
</feature>
<feature type="glycosylation site" description="N-linked (GlcNAc...) asparagine" evidence="4">
    <location>
        <position position="428"/>
    </location>
</feature>
<feature type="glycosylation site" description="N-linked (GlcNAc...) asparagine" evidence="4">
    <location>
        <position position="686"/>
    </location>
</feature>
<feature type="glycosylation site" description="N-linked (GlcNAc...) asparagine" evidence="4">
    <location>
        <position position="773"/>
    </location>
</feature>
<feature type="glycosylation site" description="O-linked (Xyl...) (chondroitin sulfate) serine" evidence="3">
    <location>
        <position position="1000"/>
    </location>
</feature>
<feature type="glycosylation site" description="N-linked (GlcNAc...) asparagine" evidence="4">
    <location>
        <position position="1136"/>
    </location>
</feature>
<feature type="glycosylation site" description="N-linked (GlcNAc...) asparagine" evidence="4">
    <location>
        <position position="1207"/>
    </location>
</feature>
<feature type="glycosylation site" description="N-linked (GlcNAc...) asparagine" evidence="11">
    <location>
        <position position="1369"/>
    </location>
</feature>
<feature type="glycosylation site" description="N-linked (GlcNAc...) asparagine" evidence="11">
    <location>
        <position position="1454"/>
    </location>
</feature>
<feature type="glycosylation site" description="N-linked (GlcNAc...) asparagine" evidence="4">
    <location>
        <position position="1650"/>
    </location>
</feature>
<feature type="glycosylation site" description="N-linked (GlcNAc...) asparagine" evidence="4">
    <location>
        <position position="1914"/>
    </location>
</feature>
<feature type="glycosylation site" description="N-linked (GlcNAc...) asparagine" evidence="11">
    <location>
        <position position="2021"/>
    </location>
</feature>
<feature type="glycosylation site" description="N-linked (GlcNAc...) asparagine" evidence="4">
    <location>
        <position position="2039"/>
    </location>
</feature>
<feature type="glycosylation site" description="N-linked (GlcNAc...) asparagine" evidence="4">
    <location>
        <position position="2045"/>
    </location>
</feature>
<feature type="glycosylation site" description="N-linked (GlcNAc...) asparagine" evidence="11">
    <location>
        <position position="2080"/>
    </location>
</feature>
<feature type="disulfide bond" evidence="5">
    <location>
        <begin position="170"/>
        <end position="193"/>
    </location>
</feature>
<feature type="disulfide bond" evidence="5">
    <location>
        <begin position="355"/>
        <end position="381"/>
    </location>
</feature>
<feature type="splice variant" id="VSP_015656" description="In isoform 2." evidence="12">
    <location>
        <begin position="1"/>
        <end position="1666"/>
    </location>
</feature>
<feature type="splice variant" id="VSP_015657" description="In isoform 3." evidence="13">
    <original>NAGNILYEHEMSSEPFWEAHDTIGLLLSSPPARDLAAT</original>
    <variation>RASLLSHHTDPNLTSGGCQLEHPPHWQLASLDPVPAQG</variation>
    <location>
        <begin position="1657"/>
        <end position="1694"/>
    </location>
</feature>
<feature type="splice variant" id="VSP_015658" description="In isoform 3." evidence="13">
    <location>
        <begin position="1695"/>
        <end position="2327"/>
    </location>
</feature>
<feature type="mutagenesis site" description="No effect on interaction with GRIP1 and GRIP2." evidence="9">
    <original>Q</original>
    <variation>G</variation>
    <location>
        <position position="2324"/>
    </location>
</feature>
<feature type="mutagenesis site" description="No effect on interaction with GRIP1 and GRIP2." evidence="9">
    <original>Y</original>
    <variation>F</variation>
    <location>
        <position position="2325"/>
    </location>
</feature>
<feature type="mutagenesis site" description="Loss of interaction with GRIP1 and GRIP2." evidence="9">
    <original>Y</original>
    <variation>G</variation>
    <location>
        <position position="2325"/>
    </location>
</feature>
<feature type="mutagenesis site" description="Loss of interaction with GRIP1 and GRIP2." evidence="9">
    <original>W</original>
    <variation>G</variation>
    <location>
        <position position="2326"/>
    </location>
</feature>
<feature type="mutagenesis site" description="Loss of interaction with GRIP1 and GRIP2." evidence="9">
    <original>V</original>
    <variation>G</variation>
    <location>
        <position position="2327"/>
    </location>
</feature>
<feature type="sequence conflict" description="In Ref. 1; AAL37505." evidence="14" ref="1">
    <original>D</original>
    <variation>V</variation>
    <location>
        <position position="1058"/>
    </location>
</feature>
<feature type="sequence conflict" description="In Ref. 5; BAD90326." evidence="14" ref="5">
    <original>S</original>
    <variation>P</variation>
    <location>
        <position position="1113"/>
    </location>
</feature>
<feature type="sequence conflict" description="In Ref. 1; AAL37505." evidence="14" ref="1">
    <original>W</original>
    <variation>R</variation>
    <location>
        <position position="1427"/>
    </location>
</feature>
<feature type="sequence conflict" description="In Ref. 1; AAL37505." evidence="14" ref="1">
    <original>Q</original>
    <variation>E</variation>
    <location>
        <position position="1520"/>
    </location>
</feature>
<feature type="sequence conflict" description="In Ref. 1; AAL37505." evidence="14" ref="1">
    <original>S</original>
    <variation>G</variation>
    <location>
        <position position="1546"/>
    </location>
</feature>
<feature type="sequence conflict" description="In Ref. 1; AAL37505." evidence="14" ref="1">
    <original>G</original>
    <variation>E</variation>
    <location>
        <position position="1929"/>
    </location>
</feature>
<feature type="sequence conflict" description="In Ref. 1; AAL37505." evidence="14" ref="1">
    <original>Q</original>
    <variation>R</variation>
    <location>
        <position position="2000"/>
    </location>
</feature>
<feature type="sequence conflict" description="In Ref. 2; BAC26150." evidence="14" ref="2">
    <original>D</original>
    <variation>H</variation>
    <location>
        <position position="2011"/>
    </location>
</feature>
<feature type="sequence conflict" description="In Ref. 1; AAL37505." evidence="14" ref="1">
    <original>G</original>
    <variation>E</variation>
    <location>
        <position position="2093"/>
    </location>
</feature>
<feature type="sequence conflict" description="In Ref. 1; AAL37505." evidence="14" ref="1">
    <original>L</original>
    <variation>H</variation>
    <location>
        <position position="2248"/>
    </location>
</feature>
<feature type="sequence conflict" description="In Ref. 1; AAL37505." evidence="14" ref="1">
    <original>P</original>
    <variation>S</variation>
    <location>
        <position position="2300"/>
    </location>
</feature>
<keyword id="KW-0025">Alternative splicing</keyword>
<keyword id="KW-0037">Angiogenesis</keyword>
<keyword id="KW-1003">Cell membrane</keyword>
<keyword id="KW-0966">Cell projection</keyword>
<keyword id="KW-0217">Developmental protein</keyword>
<keyword id="KW-0221">Differentiation</keyword>
<keyword id="KW-1015">Disulfide bond</keyword>
<keyword id="KW-0325">Glycoprotein</keyword>
<keyword id="KW-0472">Membrane</keyword>
<keyword id="KW-0597">Phosphoprotein</keyword>
<keyword id="KW-0654">Proteoglycan</keyword>
<keyword id="KW-1185">Reference proteome</keyword>
<keyword id="KW-0677">Repeat</keyword>
<keyword id="KW-0732">Signal</keyword>
<keyword id="KW-0797">Tissue remodeling</keyword>
<keyword id="KW-0807">Transducer</keyword>
<keyword id="KW-0812">Transmembrane</keyword>
<keyword id="KW-1133">Transmembrane helix</keyword>
<reference key="1">
    <citation type="journal article" date="2003" name="J. Biol. Chem.">
        <title>The proteoglycan NG2 is complexed with alpha-amino-3-hydroxy-5-methyl-4-isoxazolepropionic acid (AMPA) receptors by the PDZ glutamate receptor interaction protein (GRIP) in glial progenitor cells. Implications for glial-neuronal signaling.</title>
        <authorList>
            <person name="Stegmueller J."/>
            <person name="Werner H."/>
            <person name="Nave K.-A."/>
            <person name="Trotter J."/>
        </authorList>
    </citation>
    <scope>NUCLEOTIDE SEQUENCE [MRNA] (ISOFORM 1)</scope>
    <scope>INTERACTION WITH GRIP1; GRIP2 AND GRIA2</scope>
    <scope>MUTAGENESIS OF GLN-2324; TYR-2325; TRP-2326 AND VAL-2327</scope>
    <scope>DOMAIN</scope>
    <scope>SUBCELLULAR LOCATION</scope>
    <source>
        <tissue>Oligodendrocyte</tissue>
    </source>
</reference>
<reference key="2">
    <citation type="journal article" date="2005" name="Science">
        <title>The transcriptional landscape of the mammalian genome.</title>
        <authorList>
            <person name="Carninci P."/>
            <person name="Kasukawa T."/>
            <person name="Katayama S."/>
            <person name="Gough J."/>
            <person name="Frith M.C."/>
            <person name="Maeda N."/>
            <person name="Oyama R."/>
            <person name="Ravasi T."/>
            <person name="Lenhard B."/>
            <person name="Wells C."/>
            <person name="Kodzius R."/>
            <person name="Shimokawa K."/>
            <person name="Bajic V.B."/>
            <person name="Brenner S.E."/>
            <person name="Batalov S."/>
            <person name="Forrest A.R."/>
            <person name="Zavolan M."/>
            <person name="Davis M.J."/>
            <person name="Wilming L.G."/>
            <person name="Aidinis V."/>
            <person name="Allen J.E."/>
            <person name="Ambesi-Impiombato A."/>
            <person name="Apweiler R."/>
            <person name="Aturaliya R.N."/>
            <person name="Bailey T.L."/>
            <person name="Bansal M."/>
            <person name="Baxter L."/>
            <person name="Beisel K.W."/>
            <person name="Bersano T."/>
            <person name="Bono H."/>
            <person name="Chalk A.M."/>
            <person name="Chiu K.P."/>
            <person name="Choudhary V."/>
            <person name="Christoffels A."/>
            <person name="Clutterbuck D.R."/>
            <person name="Crowe M.L."/>
            <person name="Dalla E."/>
            <person name="Dalrymple B.P."/>
            <person name="de Bono B."/>
            <person name="Della Gatta G."/>
            <person name="di Bernardo D."/>
            <person name="Down T."/>
            <person name="Engstrom P."/>
            <person name="Fagiolini M."/>
            <person name="Faulkner G."/>
            <person name="Fletcher C.F."/>
            <person name="Fukushima T."/>
            <person name="Furuno M."/>
            <person name="Futaki S."/>
            <person name="Gariboldi M."/>
            <person name="Georgii-Hemming P."/>
            <person name="Gingeras T.R."/>
            <person name="Gojobori T."/>
            <person name="Green R.E."/>
            <person name="Gustincich S."/>
            <person name="Harbers M."/>
            <person name="Hayashi Y."/>
            <person name="Hensch T.K."/>
            <person name="Hirokawa N."/>
            <person name="Hill D."/>
            <person name="Huminiecki L."/>
            <person name="Iacono M."/>
            <person name="Ikeo K."/>
            <person name="Iwama A."/>
            <person name="Ishikawa T."/>
            <person name="Jakt M."/>
            <person name="Kanapin A."/>
            <person name="Katoh M."/>
            <person name="Kawasawa Y."/>
            <person name="Kelso J."/>
            <person name="Kitamura H."/>
            <person name="Kitano H."/>
            <person name="Kollias G."/>
            <person name="Krishnan S.P."/>
            <person name="Kruger A."/>
            <person name="Kummerfeld S.K."/>
            <person name="Kurochkin I.V."/>
            <person name="Lareau L.F."/>
            <person name="Lazarevic D."/>
            <person name="Lipovich L."/>
            <person name="Liu J."/>
            <person name="Liuni S."/>
            <person name="McWilliam S."/>
            <person name="Madan Babu M."/>
            <person name="Madera M."/>
            <person name="Marchionni L."/>
            <person name="Matsuda H."/>
            <person name="Matsuzawa S."/>
            <person name="Miki H."/>
            <person name="Mignone F."/>
            <person name="Miyake S."/>
            <person name="Morris K."/>
            <person name="Mottagui-Tabar S."/>
            <person name="Mulder N."/>
            <person name="Nakano N."/>
            <person name="Nakauchi H."/>
            <person name="Ng P."/>
            <person name="Nilsson R."/>
            <person name="Nishiguchi S."/>
            <person name="Nishikawa S."/>
            <person name="Nori F."/>
            <person name="Ohara O."/>
            <person name="Okazaki Y."/>
            <person name="Orlando V."/>
            <person name="Pang K.C."/>
            <person name="Pavan W.J."/>
            <person name="Pavesi G."/>
            <person name="Pesole G."/>
            <person name="Petrovsky N."/>
            <person name="Piazza S."/>
            <person name="Reed J."/>
            <person name="Reid J.F."/>
            <person name="Ring B.Z."/>
            <person name="Ringwald M."/>
            <person name="Rost B."/>
            <person name="Ruan Y."/>
            <person name="Salzberg S.L."/>
            <person name="Sandelin A."/>
            <person name="Schneider C."/>
            <person name="Schoenbach C."/>
            <person name="Sekiguchi K."/>
            <person name="Semple C.A."/>
            <person name="Seno S."/>
            <person name="Sessa L."/>
            <person name="Sheng Y."/>
            <person name="Shibata Y."/>
            <person name="Shimada H."/>
            <person name="Shimada K."/>
            <person name="Silva D."/>
            <person name="Sinclair B."/>
            <person name="Sperling S."/>
            <person name="Stupka E."/>
            <person name="Sugiura K."/>
            <person name="Sultana R."/>
            <person name="Takenaka Y."/>
            <person name="Taki K."/>
            <person name="Tammoja K."/>
            <person name="Tan S.L."/>
            <person name="Tang S."/>
            <person name="Taylor M.S."/>
            <person name="Tegner J."/>
            <person name="Teichmann S.A."/>
            <person name="Ueda H.R."/>
            <person name="van Nimwegen E."/>
            <person name="Verardo R."/>
            <person name="Wei C.L."/>
            <person name="Yagi K."/>
            <person name="Yamanishi H."/>
            <person name="Zabarovsky E."/>
            <person name="Zhu S."/>
            <person name="Zimmer A."/>
            <person name="Hide W."/>
            <person name="Bult C."/>
            <person name="Grimmond S.M."/>
            <person name="Teasdale R.D."/>
            <person name="Liu E.T."/>
            <person name="Brusic V."/>
            <person name="Quackenbush J."/>
            <person name="Wahlestedt C."/>
            <person name="Mattick J.S."/>
            <person name="Hume D.A."/>
            <person name="Kai C."/>
            <person name="Sasaki D."/>
            <person name="Tomaru Y."/>
            <person name="Fukuda S."/>
            <person name="Kanamori-Katayama M."/>
            <person name="Suzuki M."/>
            <person name="Aoki J."/>
            <person name="Arakawa T."/>
            <person name="Iida J."/>
            <person name="Imamura K."/>
            <person name="Itoh M."/>
            <person name="Kato T."/>
            <person name="Kawaji H."/>
            <person name="Kawagashira N."/>
            <person name="Kawashima T."/>
            <person name="Kojima M."/>
            <person name="Kondo S."/>
            <person name="Konno H."/>
            <person name="Nakano K."/>
            <person name="Ninomiya N."/>
            <person name="Nishio T."/>
            <person name="Okada M."/>
            <person name="Plessy C."/>
            <person name="Shibata K."/>
            <person name="Shiraki T."/>
            <person name="Suzuki S."/>
            <person name="Tagami M."/>
            <person name="Waki K."/>
            <person name="Watahiki A."/>
            <person name="Okamura-Oho Y."/>
            <person name="Suzuki H."/>
            <person name="Kawai J."/>
            <person name="Hayashizaki Y."/>
        </authorList>
    </citation>
    <scope>NUCLEOTIDE SEQUENCE [LARGE SCALE MRNA] (ISOFORM 2)</scope>
    <source>
        <strain>C57BL/6J</strain>
        <tissue>Embryo</tissue>
        <tissue>Skin</tissue>
    </source>
</reference>
<reference key="3">
    <citation type="journal article" date="2009" name="PLoS Biol.">
        <title>Lineage-specific biology revealed by a finished genome assembly of the mouse.</title>
        <authorList>
            <person name="Church D.M."/>
            <person name="Goodstadt L."/>
            <person name="Hillier L.W."/>
            <person name="Zody M.C."/>
            <person name="Goldstein S."/>
            <person name="She X."/>
            <person name="Bult C.J."/>
            <person name="Agarwala R."/>
            <person name="Cherry J.L."/>
            <person name="DiCuccio M."/>
            <person name="Hlavina W."/>
            <person name="Kapustin Y."/>
            <person name="Meric P."/>
            <person name="Maglott D."/>
            <person name="Birtle Z."/>
            <person name="Marques A.C."/>
            <person name="Graves T."/>
            <person name="Zhou S."/>
            <person name="Teague B."/>
            <person name="Potamousis K."/>
            <person name="Churas C."/>
            <person name="Place M."/>
            <person name="Herschleb J."/>
            <person name="Runnheim R."/>
            <person name="Forrest D."/>
            <person name="Amos-Landgraf J."/>
            <person name="Schwartz D.C."/>
            <person name="Cheng Z."/>
            <person name="Lindblad-Toh K."/>
            <person name="Eichler E.E."/>
            <person name="Ponting C.P."/>
        </authorList>
    </citation>
    <scope>NUCLEOTIDE SEQUENCE [LARGE SCALE GENOMIC DNA]</scope>
    <source>
        <strain>C57BL/6J</strain>
    </source>
</reference>
<reference key="4">
    <citation type="submission" date="2005-07" db="EMBL/GenBank/DDBJ databases">
        <authorList>
            <person name="Mural R.J."/>
            <person name="Adams M.D."/>
            <person name="Myers E.W."/>
            <person name="Smith H.O."/>
            <person name="Venter J.C."/>
        </authorList>
    </citation>
    <scope>NUCLEOTIDE SEQUENCE [LARGE SCALE GENOMIC DNA]</scope>
</reference>
<reference key="5">
    <citation type="submission" date="2005-02" db="EMBL/GenBank/DDBJ databases">
        <title>Prediction of the coding sequences of mouse homologues of KIAA gene. The complete nucleotide sequences of mouse KIAA-homologous cDNAs identified by screening of terminal sequences of cDNA clones randomly sampled from size-fractionated libraries.</title>
        <authorList>
            <person name="Okazaki N."/>
            <person name="Kikuno R.F."/>
            <person name="Ohara R."/>
            <person name="Inamoto S."/>
            <person name="Nagase T."/>
            <person name="Ohara O."/>
            <person name="Koga H."/>
        </authorList>
    </citation>
    <scope>NUCLEOTIDE SEQUENCE [LARGE SCALE MRNA] OF 999-2327 (ISOFORM 3)</scope>
    <source>
        <tissue>Fetal brain</tissue>
    </source>
</reference>
<reference key="6">
    <citation type="journal article" date="1999" name="J. Cell Sci.">
        <title>PDGF (alpha)-receptor is unresponsive to PDGF-AA in aortic smooth muscle cells from the NG2 knockout mouse.</title>
        <authorList>
            <person name="Grako K.A."/>
            <person name="Ochiya T."/>
            <person name="Barritt D."/>
            <person name="Nishiyama A."/>
            <person name="Stallcup W.B."/>
        </authorList>
    </citation>
    <scope>FUNCTION</scope>
    <scope>DISRUPTION PHENOTYPE</scope>
</reference>
<reference key="7">
    <citation type="journal article" date="2004" name="Mol. Biol. Cell">
        <title>NG2 proteoglycan promotes endothelial cell motility and angiogenesis via engagement of galectin-3 and alpha3beta1 integrin.</title>
        <authorList>
            <person name="Fukushi J."/>
            <person name="Makagiansar I.T."/>
            <person name="Stallcup W.B."/>
        </authorList>
    </citation>
    <scope>TISSUE SPECIFICITY</scope>
    <scope>FUNCTION</scope>
</reference>
<reference key="8">
    <citation type="journal article" date="2009" name="Mol. Cell. Proteomics">
        <title>The mouse C2C12 myoblast cell surface N-linked glycoproteome: identification, glycosite occupancy, and membrane orientation.</title>
        <authorList>
            <person name="Gundry R.L."/>
            <person name="Raginski K."/>
            <person name="Tarasova Y."/>
            <person name="Tchernyshyov I."/>
            <person name="Bausch-Fluck D."/>
            <person name="Elliott S.T."/>
            <person name="Boheler K.R."/>
            <person name="Van Eyk J.E."/>
            <person name="Wollscheid B."/>
        </authorList>
    </citation>
    <scope>GLYCOSYLATION [LARGE SCALE ANALYSIS] AT ASN-130; ASN-1369; ASN-1454; ASN-2021 AND ASN-2080</scope>
    <source>
        <tissue>Myoblast</tissue>
    </source>
</reference>
<reference key="9">
    <citation type="journal article" date="2010" name="Cell">
        <title>A tissue-specific atlas of mouse protein phosphorylation and expression.</title>
        <authorList>
            <person name="Huttlin E.L."/>
            <person name="Jedrychowski M.P."/>
            <person name="Elias J.E."/>
            <person name="Goswami T."/>
            <person name="Rad R."/>
            <person name="Beausoleil S.A."/>
            <person name="Villen J."/>
            <person name="Haas W."/>
            <person name="Sowa M.E."/>
            <person name="Gygi S.P."/>
        </authorList>
    </citation>
    <scope>IDENTIFICATION BY MASS SPECTROMETRY [LARGE SCALE ANALYSIS]</scope>
    <source>
        <tissue>Brain</tissue>
        <tissue>Brown adipose tissue</tissue>
        <tissue>Heart</tissue>
        <tissue>Kidney</tissue>
        <tissue>Lung</tissue>
        <tissue>Pancreas</tissue>
        <tissue>Spleen</tissue>
        <tissue>Testis</tissue>
    </source>
</reference>
<proteinExistence type="evidence at protein level"/>